<feature type="chain" id="PRO_0000118863" description="TATA box-binding protein-associated factor RNA polymerase I subunit C">
    <location>
        <begin position="1"/>
        <end position="869"/>
    </location>
</feature>
<feature type="region of interest" description="Disordered" evidence="1">
    <location>
        <begin position="605"/>
        <end position="629"/>
    </location>
</feature>
<feature type="region of interest" description="Disordered" evidence="1">
    <location>
        <begin position="729"/>
        <end position="869"/>
    </location>
</feature>
<feature type="compositionally biased region" description="Polar residues" evidence="1">
    <location>
        <begin position="835"/>
        <end position="860"/>
    </location>
</feature>
<feature type="modified residue" description="Phosphothreonine" evidence="17">
    <location>
        <position position="834"/>
    </location>
</feature>
<feature type="modified residue" description="Phosphoserine" evidence="16">
    <location>
        <position position="848"/>
    </location>
</feature>
<feature type="splice variant" id="VSP_038086" description="In isoform 5." evidence="11">
    <location>
        <begin position="1"/>
        <end position="409"/>
    </location>
</feature>
<feature type="splice variant" id="VSP_038087" description="In isoform 4." evidence="11">
    <location>
        <begin position="1"/>
        <end position="332"/>
    </location>
</feature>
<feature type="splice variant" id="VSP_015153" description="In isoform 2." evidence="12">
    <location>
        <begin position="1"/>
        <end position="67"/>
    </location>
</feature>
<feature type="splice variant" id="VSP_015154" description="In isoform 2 and isoform 6." evidence="11 12">
    <original>SKALIYTFLPHWLTCYLTPGPFHPSSA</original>
    <variation>T</variation>
    <location>
        <begin position="280"/>
        <end position="306"/>
    </location>
</feature>
<feature type="splice variant" id="VSP_015156" description="In isoform 2." evidence="12">
    <location>
        <position position="521"/>
    </location>
</feature>
<feature type="sequence variant" id="VAR_058966" description="In dbSNP:rs4782591." evidence="5 6 9 10">
    <original>C</original>
    <variation>Y</variation>
    <location>
        <position position="91"/>
    </location>
</feature>
<feature type="sequence variant" id="VAR_023245" description="In dbSNP:rs4150145." evidence="10">
    <original>S</original>
    <variation>F</variation>
    <location>
        <position position="304"/>
    </location>
</feature>
<feature type="sequence variant" id="VAR_023246" description="In dbSNP:rs4150147." evidence="10">
    <original>R</original>
    <variation>H</variation>
    <location>
        <position position="357"/>
    </location>
</feature>
<feature type="sequence variant" id="VAR_023247" description="In dbSNP:rs4150151." evidence="10">
    <original>S</original>
    <variation>L</variation>
    <location>
        <position position="387"/>
    </location>
</feature>
<feature type="sequence variant" id="VAR_023248" description="In dbSNP:rs4150165." evidence="10">
    <original>H</original>
    <variation>Y</variation>
    <location>
        <position position="518"/>
    </location>
</feature>
<feature type="sequence variant" id="VAR_057261" description="In dbSNP:rs4150167.">
    <original>G</original>
    <variation>R</variation>
    <location>
        <position position="523"/>
    </location>
</feature>
<feature type="sequence variant" id="VAR_023249" description="In dbSNP:rs4150170." evidence="10">
    <original>P</original>
    <variation>L</variation>
    <location>
        <position position="573"/>
    </location>
</feature>
<feature type="sequence variant" id="VAR_023250" description="In dbSNP:rs2230129." evidence="5 6 10">
    <original>L</original>
    <variation>M</variation>
    <location>
        <position position="575"/>
    </location>
</feature>
<feature type="sequence variant" id="VAR_023251" description="In dbSNP:rs4150172." evidence="10">
    <original>A</original>
    <variation>G</variation>
    <location>
        <position position="591"/>
    </location>
</feature>
<feature type="sequence variant" id="VAR_023252" description="In dbSNP:rs4150173." evidence="10">
    <original>G</original>
    <variation>S</variation>
    <location>
        <position position="635"/>
    </location>
</feature>
<feature type="sequence variant" id="VAR_023253" description="In dbSNP:rs4150175." evidence="10">
    <original>T</original>
    <variation>M</variation>
    <location>
        <position position="791"/>
    </location>
</feature>
<feature type="sequence variant" id="VAR_023254" description="In dbSNP:rs2230131." evidence="5 10">
    <original>P</original>
    <variation>L</variation>
    <location>
        <position position="793"/>
    </location>
</feature>
<feature type="sequence variant" id="VAR_057262" description="In dbSNP:rs3743640.">
    <original>P</original>
    <variation>S</variation>
    <location>
        <position position="808"/>
    </location>
</feature>
<feature type="sequence variant" id="VAR_023255" description="In dbSNP:rs4150176." evidence="10">
    <original>R</original>
    <variation>H</variation>
    <location>
        <position position="816"/>
    </location>
</feature>
<feature type="sequence conflict" description="In Ref. 2; BAH13010." evidence="13" ref="2">
    <original>E</original>
    <variation>K</variation>
    <location>
        <position position="244"/>
    </location>
</feature>
<feature type="sequence conflict" description="In Ref. 2; BAH14353." evidence="13" ref="2">
    <original>N</original>
    <variation>S</variation>
    <location>
        <position position="481"/>
    </location>
</feature>
<feature type="sequence conflict" description="In Ref. 2; BAH14144." evidence="13" ref="2">
    <original>S</original>
    <variation>G</variation>
    <location>
        <position position="777"/>
    </location>
</feature>
<organism>
    <name type="scientific">Homo sapiens</name>
    <name type="common">Human</name>
    <dbReference type="NCBI Taxonomy" id="9606"/>
    <lineage>
        <taxon>Eukaryota</taxon>
        <taxon>Metazoa</taxon>
        <taxon>Chordata</taxon>
        <taxon>Craniata</taxon>
        <taxon>Vertebrata</taxon>
        <taxon>Euteleostomi</taxon>
        <taxon>Mammalia</taxon>
        <taxon>Eutheria</taxon>
        <taxon>Euarchontoglires</taxon>
        <taxon>Primates</taxon>
        <taxon>Haplorrhini</taxon>
        <taxon>Catarrhini</taxon>
        <taxon>Hominidae</taxon>
        <taxon>Homo</taxon>
    </lineage>
</organism>
<proteinExistence type="evidence at protein level"/>
<reference key="1">
    <citation type="journal article" date="1994" name="Science">
        <title>Reconstitution of transcription factor SL1: exclusive binding of TBP by SL1 or TFIID subunits.</title>
        <authorList>
            <person name="Comai L."/>
            <person name="Zomerdijk J.C.B.M."/>
            <person name="Beckmann H."/>
            <person name="Zhou S."/>
            <person name="Admon A."/>
            <person name="Tjian R."/>
        </authorList>
    </citation>
    <scope>NUCLEOTIDE SEQUENCE [MRNA] (ISOFORM 1)</scope>
    <scope>PROTEIN SEQUENCE OF 55-65; 96-112; 125-131; 324-337; 338-354; 553-561; 563-582 AND 646-659</scope>
    <scope>INTERACTION WITH TBP; TAF1A AND TAF1B</scope>
    <scope>IDENTIFICATION IN THE SL1 COMPLEX</scope>
    <scope>VARIANT TYR-91</scope>
</reference>
<reference key="2">
    <citation type="journal article" date="2004" name="Nat. Genet.">
        <title>Complete sequencing and characterization of 21,243 full-length human cDNAs.</title>
        <authorList>
            <person name="Ota T."/>
            <person name="Suzuki Y."/>
            <person name="Nishikawa T."/>
            <person name="Otsuki T."/>
            <person name="Sugiyama T."/>
            <person name="Irie R."/>
            <person name="Wakamatsu A."/>
            <person name="Hayashi K."/>
            <person name="Sato H."/>
            <person name="Nagai K."/>
            <person name="Kimura K."/>
            <person name="Makita H."/>
            <person name="Sekine M."/>
            <person name="Obayashi M."/>
            <person name="Nishi T."/>
            <person name="Shibahara T."/>
            <person name="Tanaka T."/>
            <person name="Ishii S."/>
            <person name="Yamamoto J."/>
            <person name="Saito K."/>
            <person name="Kawai Y."/>
            <person name="Isono Y."/>
            <person name="Nakamura Y."/>
            <person name="Nagahari K."/>
            <person name="Murakami K."/>
            <person name="Yasuda T."/>
            <person name="Iwayanagi T."/>
            <person name="Wagatsuma M."/>
            <person name="Shiratori A."/>
            <person name="Sudo H."/>
            <person name="Hosoiri T."/>
            <person name="Kaku Y."/>
            <person name="Kodaira H."/>
            <person name="Kondo H."/>
            <person name="Sugawara M."/>
            <person name="Takahashi M."/>
            <person name="Kanda K."/>
            <person name="Yokoi T."/>
            <person name="Furuya T."/>
            <person name="Kikkawa E."/>
            <person name="Omura Y."/>
            <person name="Abe K."/>
            <person name="Kamihara K."/>
            <person name="Katsuta N."/>
            <person name="Sato K."/>
            <person name="Tanikawa M."/>
            <person name="Yamazaki M."/>
            <person name="Ninomiya K."/>
            <person name="Ishibashi T."/>
            <person name="Yamashita H."/>
            <person name="Murakawa K."/>
            <person name="Fujimori K."/>
            <person name="Tanai H."/>
            <person name="Kimata M."/>
            <person name="Watanabe M."/>
            <person name="Hiraoka S."/>
            <person name="Chiba Y."/>
            <person name="Ishida S."/>
            <person name="Ono Y."/>
            <person name="Takiguchi S."/>
            <person name="Watanabe S."/>
            <person name="Yosida M."/>
            <person name="Hotuta T."/>
            <person name="Kusano J."/>
            <person name="Kanehori K."/>
            <person name="Takahashi-Fujii A."/>
            <person name="Hara H."/>
            <person name="Tanase T.-O."/>
            <person name="Nomura Y."/>
            <person name="Togiya S."/>
            <person name="Komai F."/>
            <person name="Hara R."/>
            <person name="Takeuchi K."/>
            <person name="Arita M."/>
            <person name="Imose N."/>
            <person name="Musashino K."/>
            <person name="Yuuki H."/>
            <person name="Oshima A."/>
            <person name="Sasaki N."/>
            <person name="Aotsuka S."/>
            <person name="Yoshikawa Y."/>
            <person name="Matsunawa H."/>
            <person name="Ichihara T."/>
            <person name="Shiohata N."/>
            <person name="Sano S."/>
            <person name="Moriya S."/>
            <person name="Momiyama H."/>
            <person name="Satoh N."/>
            <person name="Takami S."/>
            <person name="Terashima Y."/>
            <person name="Suzuki O."/>
            <person name="Nakagawa S."/>
            <person name="Senoh A."/>
            <person name="Mizoguchi H."/>
            <person name="Goto Y."/>
            <person name="Shimizu F."/>
            <person name="Wakebe H."/>
            <person name="Hishigaki H."/>
            <person name="Watanabe T."/>
            <person name="Sugiyama A."/>
            <person name="Takemoto M."/>
            <person name="Kawakami B."/>
            <person name="Yamazaki M."/>
            <person name="Watanabe K."/>
            <person name="Kumagai A."/>
            <person name="Itakura S."/>
            <person name="Fukuzumi Y."/>
            <person name="Fujimori Y."/>
            <person name="Komiyama M."/>
            <person name="Tashiro H."/>
            <person name="Tanigami A."/>
            <person name="Fujiwara T."/>
            <person name="Ono T."/>
            <person name="Yamada K."/>
            <person name="Fujii Y."/>
            <person name="Ozaki K."/>
            <person name="Hirao M."/>
            <person name="Ohmori Y."/>
            <person name="Kawabata A."/>
            <person name="Hikiji T."/>
            <person name="Kobatake N."/>
            <person name="Inagaki H."/>
            <person name="Ikema Y."/>
            <person name="Okamoto S."/>
            <person name="Okitani R."/>
            <person name="Kawakami T."/>
            <person name="Noguchi S."/>
            <person name="Itoh T."/>
            <person name="Shigeta K."/>
            <person name="Senba T."/>
            <person name="Matsumura K."/>
            <person name="Nakajima Y."/>
            <person name="Mizuno T."/>
            <person name="Morinaga M."/>
            <person name="Sasaki M."/>
            <person name="Togashi T."/>
            <person name="Oyama M."/>
            <person name="Hata H."/>
            <person name="Watanabe M."/>
            <person name="Komatsu T."/>
            <person name="Mizushima-Sugano J."/>
            <person name="Satoh T."/>
            <person name="Shirai Y."/>
            <person name="Takahashi Y."/>
            <person name="Nakagawa K."/>
            <person name="Okumura K."/>
            <person name="Nagase T."/>
            <person name="Nomura N."/>
            <person name="Kikuchi H."/>
            <person name="Masuho Y."/>
            <person name="Yamashita R."/>
            <person name="Nakai K."/>
            <person name="Yada T."/>
            <person name="Nakamura Y."/>
            <person name="Ohara O."/>
            <person name="Isogai T."/>
            <person name="Sugano S."/>
        </authorList>
    </citation>
    <scope>NUCLEOTIDE SEQUENCE [LARGE SCALE MRNA] (ISOFORMS 4; 5 AND 6)</scope>
    <scope>VARIANTS TYR-91; MET-575 AND LEU-793</scope>
</reference>
<reference key="3">
    <citation type="submission" date="2005-03" db="EMBL/GenBank/DDBJ databases">
        <authorList>
            <person name="Totoki Y."/>
            <person name="Toyoda A."/>
            <person name="Takeda T."/>
            <person name="Sakaki Y."/>
            <person name="Tanaka A."/>
            <person name="Yokoyama S."/>
            <person name="Ohara O."/>
            <person name="Nagase T."/>
            <person name="Kikuno R.F."/>
        </authorList>
    </citation>
    <scope>NUCLEOTIDE SEQUENCE [LARGE SCALE MRNA] (ISOFORM 1)</scope>
    <source>
        <tissue>Spleen</tissue>
    </source>
</reference>
<reference key="4">
    <citation type="submission" date="2002-10" db="EMBL/GenBank/DDBJ databases">
        <authorList>
            <consortium name="NIEHS SNPs program"/>
        </authorList>
    </citation>
    <scope>NUCLEOTIDE SEQUENCE [GENOMIC DNA]</scope>
    <scope>VARIANTS TYR-91; PHE-304; HIS-357; LEU-387; TYR-518; LEU-573; MET-575; GLY-591; SER-635; MET-791; LEU-793 AND HIS-816</scope>
</reference>
<reference key="5">
    <citation type="journal article" date="2004" name="Nature">
        <title>The sequence and analysis of duplication-rich human chromosome 16.</title>
        <authorList>
            <person name="Martin J."/>
            <person name="Han C."/>
            <person name="Gordon L.A."/>
            <person name="Terry A."/>
            <person name="Prabhakar S."/>
            <person name="She X."/>
            <person name="Xie G."/>
            <person name="Hellsten U."/>
            <person name="Chan Y.M."/>
            <person name="Altherr M."/>
            <person name="Couronne O."/>
            <person name="Aerts A."/>
            <person name="Bajorek E."/>
            <person name="Black S."/>
            <person name="Blumer H."/>
            <person name="Branscomb E."/>
            <person name="Brown N.C."/>
            <person name="Bruno W.J."/>
            <person name="Buckingham J.M."/>
            <person name="Callen D.F."/>
            <person name="Campbell C.S."/>
            <person name="Campbell M.L."/>
            <person name="Campbell E.W."/>
            <person name="Caoile C."/>
            <person name="Challacombe J.F."/>
            <person name="Chasteen L.A."/>
            <person name="Chertkov O."/>
            <person name="Chi H.C."/>
            <person name="Christensen M."/>
            <person name="Clark L.M."/>
            <person name="Cohn J.D."/>
            <person name="Denys M."/>
            <person name="Detter J.C."/>
            <person name="Dickson M."/>
            <person name="Dimitrijevic-Bussod M."/>
            <person name="Escobar J."/>
            <person name="Fawcett J.J."/>
            <person name="Flowers D."/>
            <person name="Fotopulos D."/>
            <person name="Glavina T."/>
            <person name="Gomez M."/>
            <person name="Gonzales E."/>
            <person name="Goodstein D."/>
            <person name="Goodwin L.A."/>
            <person name="Grady D.L."/>
            <person name="Grigoriev I."/>
            <person name="Groza M."/>
            <person name="Hammon N."/>
            <person name="Hawkins T."/>
            <person name="Haydu L."/>
            <person name="Hildebrand C.E."/>
            <person name="Huang W."/>
            <person name="Israni S."/>
            <person name="Jett J."/>
            <person name="Jewett P.B."/>
            <person name="Kadner K."/>
            <person name="Kimball H."/>
            <person name="Kobayashi A."/>
            <person name="Krawczyk M.-C."/>
            <person name="Leyba T."/>
            <person name="Longmire J.L."/>
            <person name="Lopez F."/>
            <person name="Lou Y."/>
            <person name="Lowry S."/>
            <person name="Ludeman T."/>
            <person name="Manohar C.F."/>
            <person name="Mark G.A."/>
            <person name="McMurray K.L."/>
            <person name="Meincke L.J."/>
            <person name="Morgan J."/>
            <person name="Moyzis R.K."/>
            <person name="Mundt M.O."/>
            <person name="Munk A.C."/>
            <person name="Nandkeshwar R.D."/>
            <person name="Pitluck S."/>
            <person name="Pollard M."/>
            <person name="Predki P."/>
            <person name="Parson-Quintana B."/>
            <person name="Ramirez L."/>
            <person name="Rash S."/>
            <person name="Retterer J."/>
            <person name="Ricke D.O."/>
            <person name="Robinson D.L."/>
            <person name="Rodriguez A."/>
            <person name="Salamov A."/>
            <person name="Saunders E.H."/>
            <person name="Scott D."/>
            <person name="Shough T."/>
            <person name="Stallings R.L."/>
            <person name="Stalvey M."/>
            <person name="Sutherland R.D."/>
            <person name="Tapia R."/>
            <person name="Tesmer J.G."/>
            <person name="Thayer N."/>
            <person name="Thompson L.S."/>
            <person name="Tice H."/>
            <person name="Torney D.C."/>
            <person name="Tran-Gyamfi M."/>
            <person name="Tsai M."/>
            <person name="Ulanovsky L.E."/>
            <person name="Ustaszewska A."/>
            <person name="Vo N."/>
            <person name="White P.S."/>
            <person name="Williams A.L."/>
            <person name="Wills P.L."/>
            <person name="Wu J.-R."/>
            <person name="Wu K."/>
            <person name="Yang J."/>
            <person name="DeJong P."/>
            <person name="Bruce D."/>
            <person name="Doggett N.A."/>
            <person name="Deaven L."/>
            <person name="Schmutz J."/>
            <person name="Grimwood J."/>
            <person name="Richardson P."/>
            <person name="Rokhsar D.S."/>
            <person name="Eichler E.E."/>
            <person name="Gilna P."/>
            <person name="Lucas S.M."/>
            <person name="Myers R.M."/>
            <person name="Rubin E.M."/>
            <person name="Pennacchio L.A."/>
        </authorList>
    </citation>
    <scope>NUCLEOTIDE SEQUENCE [LARGE SCALE GENOMIC DNA]</scope>
</reference>
<reference key="6">
    <citation type="journal article" date="2004" name="Genome Res.">
        <title>The status, quality, and expansion of the NIH full-length cDNA project: the Mammalian Gene Collection (MGC).</title>
        <authorList>
            <consortium name="The MGC Project Team"/>
        </authorList>
    </citation>
    <scope>NUCLEOTIDE SEQUENCE [LARGE SCALE MRNA] (ISOFORM 2)</scope>
    <scope>VARIANTS TYR-91 AND MET-575</scope>
    <source>
        <tissue>Lung</tissue>
    </source>
</reference>
<reference key="7">
    <citation type="journal article" date="2000" name="Mol. Cell. Biol.">
        <title>Repression of RNA polymerase I transcription by the tumor suppressor p53.</title>
        <authorList>
            <person name="Zhai W."/>
            <person name="Comai L."/>
        </authorList>
    </citation>
    <scope>INTERACTION WITH TP53</scope>
</reference>
<reference key="8">
    <citation type="journal article" date="2001" name="EMBO J.">
        <title>hRRN3 is essential in the SL1-mediated recruitment of RNA polymerase I to rRNA gene promoters.</title>
        <authorList>
            <person name="Miller G."/>
            <person name="Panov K.I."/>
            <person name="Friedrich J.K."/>
            <person name="Trinkle-Mulcahy L."/>
            <person name="Lamond A.I."/>
            <person name="Zomerdijk J.C.B.M."/>
        </authorList>
    </citation>
    <scope>FUNCTION OF THE SL1/TIF-IB COMPLEX</scope>
    <scope>SUBUNIT</scope>
    <scope>INTERACTION WITH RRN3</scope>
    <scope>SUBCELLULAR LOCATION</scope>
</reference>
<reference key="9">
    <citation type="journal article" date="2001" name="Mol. Cell. Biol.">
        <title>A step subsequent to preinitiation complex assembly at the ribosomal RNA gene promoter is rate limiting for human RNA polymerase I-dependent transcription.</title>
        <authorList>
            <person name="Panov K.I."/>
            <person name="Friedrich J.K."/>
            <person name="Zomerdijk J.C."/>
        </authorList>
    </citation>
    <scope>FUNCTION OF THE SL1/TIF-IB COMPLEX</scope>
    <scope>SUBUNIT</scope>
    <scope>SUBCELLULAR LOCATION</scope>
</reference>
<reference key="10">
    <citation type="journal article" date="2005" name="J. Biol. Chem.">
        <title>TBP-TAF complex SL1 directs RNA polymerase I pre-initiation complex formation and stabilizes upstream binding factor at the rDNA promoter.</title>
        <authorList>
            <person name="Friedrich J.K."/>
            <person name="Panov K.I."/>
            <person name="Cabart P."/>
            <person name="Russell J."/>
            <person name="Zomerdijk J.C.B.M."/>
        </authorList>
    </citation>
    <scope>FUNCTION OF THE SL1 COMPLEX</scope>
</reference>
<reference key="11">
    <citation type="journal article" date="2005" name="Nat. Cell Biol.">
        <title>c-Myc binds to human ribosomal DNA and stimulates transcription of rRNA genes by RNA polymerase I.</title>
        <authorList>
            <person name="Grandori C."/>
            <person name="Gomez-Roman N."/>
            <person name="Felton-Edkins Z.A."/>
            <person name="Ngouenet C."/>
            <person name="Galloway D.A."/>
            <person name="Eisenman R.N."/>
            <person name="White R.J."/>
        </authorList>
    </citation>
    <scope>INTERACTION WITH MYC</scope>
</reference>
<reference key="12">
    <citation type="journal article" date="2007" name="Science">
        <title>ATM and ATR substrate analysis reveals extensive protein networks responsive to DNA damage.</title>
        <authorList>
            <person name="Matsuoka S."/>
            <person name="Ballif B.A."/>
            <person name="Smogorzewska A."/>
            <person name="McDonald E.R. III"/>
            <person name="Hurov K.E."/>
            <person name="Luo J."/>
            <person name="Bakalarski C.E."/>
            <person name="Zhao Z."/>
            <person name="Solimini N."/>
            <person name="Lerenthal Y."/>
            <person name="Shiloh Y."/>
            <person name="Gygi S.P."/>
            <person name="Elledge S.J."/>
        </authorList>
    </citation>
    <scope>PHOSPHORYLATION [LARGE SCALE ANALYSIS] AT SER-848</scope>
    <scope>IDENTIFICATION BY MASS SPECTROMETRY [LARGE SCALE ANALYSIS]</scope>
    <source>
        <tissue>Embryonic kidney</tissue>
    </source>
</reference>
<reference key="13">
    <citation type="journal article" date="2008" name="J. Proteome Res.">
        <title>Combining protein-based IMAC, peptide-based IMAC, and MudPIT for efficient phosphoproteomic analysis.</title>
        <authorList>
            <person name="Cantin G.T."/>
            <person name="Yi W."/>
            <person name="Lu B."/>
            <person name="Park S.K."/>
            <person name="Xu T."/>
            <person name="Lee J.-D."/>
            <person name="Yates J.R. III"/>
        </authorList>
    </citation>
    <scope>IDENTIFICATION BY MASS SPECTROMETRY [LARGE SCALE ANALYSIS]</scope>
    <source>
        <tissue>Cervix carcinoma</tissue>
    </source>
</reference>
<reference key="14">
    <citation type="journal article" date="2008" name="Proc. Natl. Acad. Sci. U.S.A.">
        <title>A quantitative atlas of mitotic phosphorylation.</title>
        <authorList>
            <person name="Dephoure N."/>
            <person name="Zhou C."/>
            <person name="Villen J."/>
            <person name="Beausoleil S.A."/>
            <person name="Bakalarski C.E."/>
            <person name="Elledge S.J."/>
            <person name="Gygi S.P."/>
        </authorList>
    </citation>
    <scope>IDENTIFICATION BY MASS SPECTROMETRY [LARGE SCALE ANALYSIS]</scope>
    <source>
        <tissue>Cervix carcinoma</tissue>
    </source>
</reference>
<reference key="15">
    <citation type="journal article" date="2013" name="J. Proteome Res.">
        <title>Toward a comprehensive characterization of a human cancer cell phosphoproteome.</title>
        <authorList>
            <person name="Zhou H."/>
            <person name="Di Palma S."/>
            <person name="Preisinger C."/>
            <person name="Peng M."/>
            <person name="Polat A.N."/>
            <person name="Heck A.J."/>
            <person name="Mohammed S."/>
        </authorList>
    </citation>
    <scope>PHOSPHORYLATION [LARGE SCALE ANALYSIS] AT THR-834</scope>
    <scope>IDENTIFICATION BY MASS SPECTROMETRY [LARGE SCALE ANALYSIS]</scope>
    <source>
        <tissue>Cervix carcinoma</tissue>
        <tissue>Erythroleukemia</tissue>
    </source>
</reference>
<evidence type="ECO:0000256" key="1">
    <source>
        <dbReference type="SAM" id="MobiDB-lite"/>
    </source>
</evidence>
<evidence type="ECO:0000269" key="2">
    <source>
    </source>
</evidence>
<evidence type="ECO:0000269" key="3">
    <source>
    </source>
</evidence>
<evidence type="ECO:0000269" key="4">
    <source>
    </source>
</evidence>
<evidence type="ECO:0000269" key="5">
    <source>
    </source>
</evidence>
<evidence type="ECO:0000269" key="6">
    <source>
    </source>
</evidence>
<evidence type="ECO:0000269" key="7">
    <source>
    </source>
</evidence>
<evidence type="ECO:0000269" key="8">
    <source>
    </source>
</evidence>
<evidence type="ECO:0000269" key="9">
    <source>
    </source>
</evidence>
<evidence type="ECO:0000269" key="10">
    <source ref="4"/>
</evidence>
<evidence type="ECO:0000303" key="11">
    <source>
    </source>
</evidence>
<evidence type="ECO:0000303" key="12">
    <source>
    </source>
</evidence>
<evidence type="ECO:0000305" key="13"/>
<evidence type="ECO:0000305" key="14">
    <source>
    </source>
</evidence>
<evidence type="ECO:0000305" key="15">
    <source>
    </source>
</evidence>
<evidence type="ECO:0007744" key="16">
    <source>
    </source>
</evidence>
<evidence type="ECO:0007744" key="17">
    <source>
    </source>
</evidence>
<dbReference type="EMBL" id="L39059">
    <property type="protein sequence ID" value="AAA62861.1"/>
    <property type="molecule type" value="mRNA"/>
</dbReference>
<dbReference type="EMBL" id="AK299060">
    <property type="protein sequence ID" value="BAH12941.1"/>
    <property type="molecule type" value="mRNA"/>
</dbReference>
<dbReference type="EMBL" id="AK299347">
    <property type="protein sequence ID" value="BAH13010.1"/>
    <property type="molecule type" value="mRNA"/>
</dbReference>
<dbReference type="EMBL" id="AK304261">
    <property type="protein sequence ID" value="BAH14144.1"/>
    <property type="molecule type" value="mRNA"/>
</dbReference>
<dbReference type="EMBL" id="AK315982">
    <property type="protein sequence ID" value="BAH14353.1"/>
    <property type="molecule type" value="mRNA"/>
</dbReference>
<dbReference type="EMBL" id="AB209594">
    <property type="protein sequence ID" value="BAD92831.1"/>
    <property type="status" value="ALT_SEQ"/>
    <property type="molecule type" value="mRNA"/>
</dbReference>
<dbReference type="EMBL" id="AY158985">
    <property type="protein sequence ID" value="AAN38818.1"/>
    <property type="molecule type" value="Genomic_DNA"/>
</dbReference>
<dbReference type="EMBL" id="AC009123">
    <property type="status" value="NOT_ANNOTATED_CDS"/>
    <property type="molecule type" value="Genomic_DNA"/>
</dbReference>
<dbReference type="EMBL" id="BC028131">
    <property type="protein sequence ID" value="AAH28131.1"/>
    <property type="molecule type" value="mRNA"/>
</dbReference>
<dbReference type="CCDS" id="CCDS32496.1">
    <molecule id="Q15572-1"/>
</dbReference>
<dbReference type="CCDS" id="CCDS45535.1">
    <molecule id="Q15572-2"/>
</dbReference>
<dbReference type="CCDS" id="CCDS58488.1">
    <molecule id="Q15572-4"/>
</dbReference>
<dbReference type="CCDS" id="CCDS58489.1">
    <molecule id="Q15572-6"/>
</dbReference>
<dbReference type="PIR" id="A55384">
    <property type="entry name" value="A55384"/>
</dbReference>
<dbReference type="RefSeq" id="NP_001230085.2">
    <molecule id="Q15572-6"/>
    <property type="nucleotide sequence ID" value="NM_001243156.2"/>
</dbReference>
<dbReference type="RefSeq" id="NP_001230086.1">
    <molecule id="Q15572-4"/>
    <property type="nucleotide sequence ID" value="NM_001243157.2"/>
</dbReference>
<dbReference type="RefSeq" id="NP_001230087.1">
    <molecule id="Q15572-4"/>
    <property type="nucleotide sequence ID" value="NM_001243158.2"/>
</dbReference>
<dbReference type="RefSeq" id="NP_001230088.1">
    <molecule id="Q15572-5"/>
    <property type="nucleotide sequence ID" value="NM_001243159.2"/>
</dbReference>
<dbReference type="RefSeq" id="NP_005670.3">
    <molecule id="Q15572-1"/>
    <property type="nucleotide sequence ID" value="NM_005679.3"/>
</dbReference>
<dbReference type="RefSeq" id="NP_647610.3">
    <molecule id="Q15572-2"/>
    <property type="nucleotide sequence ID" value="NM_139353.3"/>
</dbReference>
<dbReference type="RefSeq" id="XP_005256283.1">
    <molecule id="Q15572-1"/>
    <property type="nucleotide sequence ID" value="XM_005256226.4"/>
</dbReference>
<dbReference type="RefSeq" id="XP_016879334.1">
    <molecule id="Q15572-6"/>
    <property type="nucleotide sequence ID" value="XM_017023845.2"/>
</dbReference>
<dbReference type="RefSeq" id="XP_016879337.1">
    <property type="nucleotide sequence ID" value="XM_017023848.1"/>
</dbReference>
<dbReference type="BioGRID" id="114482">
    <property type="interactions" value="125"/>
</dbReference>
<dbReference type="ComplexPortal" id="CPX-7978">
    <property type="entry name" value="RNA polymerase I selectivity factor 1 complex"/>
</dbReference>
<dbReference type="CORUM" id="Q15572"/>
<dbReference type="DIP" id="DIP-269N"/>
<dbReference type="FunCoup" id="Q15572">
    <property type="interactions" value="2136"/>
</dbReference>
<dbReference type="IntAct" id="Q15572">
    <property type="interactions" value="85"/>
</dbReference>
<dbReference type="MINT" id="Q15572"/>
<dbReference type="STRING" id="9606.ENSP00000455265"/>
<dbReference type="GlyCosmos" id="Q15572">
    <property type="glycosylation" value="1 site, 1 glycan"/>
</dbReference>
<dbReference type="GlyGen" id="Q15572">
    <property type="glycosylation" value="7 sites, 1 O-linked glycan (5 sites)"/>
</dbReference>
<dbReference type="iPTMnet" id="Q15572"/>
<dbReference type="PhosphoSitePlus" id="Q15572"/>
<dbReference type="BioMuta" id="TAF1C"/>
<dbReference type="DMDM" id="313104019"/>
<dbReference type="jPOST" id="Q15572"/>
<dbReference type="MassIVE" id="Q15572"/>
<dbReference type="PaxDb" id="9606-ENSP00000455265"/>
<dbReference type="PeptideAtlas" id="Q15572"/>
<dbReference type="ProteomicsDB" id="60638">
    <molecule id="Q15572-1"/>
</dbReference>
<dbReference type="ProteomicsDB" id="60639">
    <molecule id="Q15572-2"/>
</dbReference>
<dbReference type="ProteomicsDB" id="60640">
    <molecule id="Q15572-4"/>
</dbReference>
<dbReference type="ProteomicsDB" id="60641">
    <molecule id="Q15572-5"/>
</dbReference>
<dbReference type="ProteomicsDB" id="60642">
    <molecule id="Q15572-6"/>
</dbReference>
<dbReference type="Pumba" id="Q15572"/>
<dbReference type="Antibodypedia" id="17054">
    <property type="antibodies" value="149 antibodies from 26 providers"/>
</dbReference>
<dbReference type="DNASU" id="9013"/>
<dbReference type="Ensembl" id="ENST00000341690.10">
    <molecule id="Q15572-2"/>
    <property type="protein sequence ID" value="ENSP00000345305.6"/>
    <property type="gene ID" value="ENSG00000103168.17"/>
</dbReference>
<dbReference type="Ensembl" id="ENST00000541676.5">
    <molecule id="Q15572-4"/>
    <property type="protein sequence ID" value="ENSP00000437900.2"/>
    <property type="gene ID" value="ENSG00000103168.17"/>
</dbReference>
<dbReference type="Ensembl" id="ENST00000566732.6">
    <molecule id="Q15572-6"/>
    <property type="protein sequence ID" value="ENSP00000455933.1"/>
    <property type="gene ID" value="ENSG00000103168.17"/>
</dbReference>
<dbReference type="Ensembl" id="ENST00000567759.5">
    <molecule id="Q15572-1"/>
    <property type="protein sequence ID" value="ENSP00000455265.1"/>
    <property type="gene ID" value="ENSG00000103168.17"/>
</dbReference>
<dbReference type="Ensembl" id="ENST00000570117.5">
    <molecule id="Q15572-4"/>
    <property type="protein sequence ID" value="ENSP00000455247.1"/>
    <property type="gene ID" value="ENSG00000103168.17"/>
</dbReference>
<dbReference type="GeneID" id="9013"/>
<dbReference type="KEGG" id="hsa:9013"/>
<dbReference type="MANE-Select" id="ENST00000566732.6">
    <molecule id="Q15572-6"/>
    <property type="protein sequence ID" value="ENSP00000455933.1"/>
    <property type="RefSeq nucleotide sequence ID" value="NM_001243156.2"/>
    <property type="RefSeq protein sequence ID" value="NP_001230085.2"/>
</dbReference>
<dbReference type="UCSC" id="uc002fhm.4">
    <molecule id="Q15572-1"/>
    <property type="organism name" value="human"/>
</dbReference>
<dbReference type="AGR" id="HGNC:11534"/>
<dbReference type="CTD" id="9013"/>
<dbReference type="DisGeNET" id="9013"/>
<dbReference type="GeneCards" id="TAF1C"/>
<dbReference type="HGNC" id="HGNC:11534">
    <property type="gene designation" value="TAF1C"/>
</dbReference>
<dbReference type="HPA" id="ENSG00000103168">
    <property type="expression patterns" value="Low tissue specificity"/>
</dbReference>
<dbReference type="MalaCards" id="TAF1C"/>
<dbReference type="MIM" id="604905">
    <property type="type" value="gene"/>
</dbReference>
<dbReference type="neXtProt" id="NX_Q15572"/>
<dbReference type="OpenTargets" id="ENSG00000103168"/>
<dbReference type="PharmGKB" id="PA36309"/>
<dbReference type="VEuPathDB" id="HostDB:ENSG00000103168"/>
<dbReference type="eggNOG" id="ENOG502QTCT">
    <property type="taxonomic scope" value="Eukaryota"/>
</dbReference>
<dbReference type="GeneTree" id="ENSGT00390000010767"/>
<dbReference type="HOGENOM" id="CLU_037918_0_0_1"/>
<dbReference type="InParanoid" id="Q15572"/>
<dbReference type="OMA" id="CCRRWLK"/>
<dbReference type="OrthoDB" id="2382881at2759"/>
<dbReference type="PAN-GO" id="Q15572">
    <property type="GO annotations" value="2 GO annotations based on evolutionary models"/>
</dbReference>
<dbReference type="PhylomeDB" id="Q15572"/>
<dbReference type="TreeFam" id="TF351959"/>
<dbReference type="PathwayCommons" id="Q15572"/>
<dbReference type="Reactome" id="R-HSA-427359">
    <property type="pathway name" value="SIRT1 negatively regulates rRNA expression"/>
</dbReference>
<dbReference type="Reactome" id="R-HSA-427413">
    <property type="pathway name" value="NoRC negatively regulates rRNA expression"/>
</dbReference>
<dbReference type="Reactome" id="R-HSA-5250924">
    <property type="pathway name" value="B-WICH complex positively regulates rRNA expression"/>
</dbReference>
<dbReference type="Reactome" id="R-HSA-73762">
    <property type="pathway name" value="RNA Polymerase I Transcription Initiation"/>
</dbReference>
<dbReference type="Reactome" id="R-HSA-73772">
    <property type="pathway name" value="RNA Polymerase I Promoter Escape"/>
</dbReference>
<dbReference type="Reactome" id="R-HSA-73863">
    <property type="pathway name" value="RNA Polymerase I Transcription Termination"/>
</dbReference>
<dbReference type="SignaLink" id="Q15572"/>
<dbReference type="SIGNOR" id="Q15572"/>
<dbReference type="BioGRID-ORCS" id="9013">
    <property type="hits" value="737 hits in 1181 CRISPR screens"/>
</dbReference>
<dbReference type="GeneWiki" id="TAF1C"/>
<dbReference type="GenomeRNAi" id="9013"/>
<dbReference type="Pharos" id="Q15572">
    <property type="development level" value="Tbio"/>
</dbReference>
<dbReference type="PRO" id="PR:Q15572"/>
<dbReference type="Proteomes" id="UP000005640">
    <property type="component" value="Chromosome 16"/>
</dbReference>
<dbReference type="RNAct" id="Q15572">
    <property type="molecule type" value="protein"/>
</dbReference>
<dbReference type="Bgee" id="ENSG00000103168">
    <property type="expression patterns" value="Expressed in left ovary and 167 other cell types or tissues"/>
</dbReference>
<dbReference type="ExpressionAtlas" id="Q15572">
    <property type="expression patterns" value="baseline and differential"/>
</dbReference>
<dbReference type="GO" id="GO:0001650">
    <property type="term" value="C:fibrillar center"/>
    <property type="evidence" value="ECO:0000314"/>
    <property type="project" value="HPA"/>
</dbReference>
<dbReference type="GO" id="GO:0005730">
    <property type="term" value="C:nucleolus"/>
    <property type="evidence" value="ECO:0000314"/>
    <property type="project" value="ParkinsonsUK-UCL"/>
</dbReference>
<dbReference type="GO" id="GO:0005654">
    <property type="term" value="C:nucleoplasm"/>
    <property type="evidence" value="ECO:0000314"/>
    <property type="project" value="HPA"/>
</dbReference>
<dbReference type="GO" id="GO:0005668">
    <property type="term" value="C:RNA polymerase transcription factor SL1 complex"/>
    <property type="evidence" value="ECO:0000314"/>
    <property type="project" value="UniProtKB"/>
</dbReference>
<dbReference type="GO" id="GO:0001164">
    <property type="term" value="F:RNA polymerase I core promoter sequence-specific DNA binding"/>
    <property type="evidence" value="ECO:0000314"/>
    <property type="project" value="UniProtKB"/>
</dbReference>
<dbReference type="GO" id="GO:0001181">
    <property type="term" value="F:RNA polymerase I general transcription initiation factor activity"/>
    <property type="evidence" value="ECO:0000314"/>
    <property type="project" value="ARUK-UCL"/>
</dbReference>
<dbReference type="GO" id="GO:0006360">
    <property type="term" value="P:transcription by RNA polymerase I"/>
    <property type="evidence" value="ECO:0000304"/>
    <property type="project" value="ProtInc"/>
</dbReference>
<dbReference type="GO" id="GO:0006366">
    <property type="term" value="P:transcription by RNA polymerase II"/>
    <property type="evidence" value="ECO:0000304"/>
    <property type="project" value="ProtInc"/>
</dbReference>
<dbReference type="GO" id="GO:0006361">
    <property type="term" value="P:transcription initiation at RNA polymerase I promoter"/>
    <property type="evidence" value="ECO:0000303"/>
    <property type="project" value="ParkinsonsUK-UCL"/>
</dbReference>
<dbReference type="Gene3D" id="2.130.10.10">
    <property type="entry name" value="YVTN repeat-like/Quinoprotein amine dehydrogenase"/>
    <property type="match status" value="1"/>
</dbReference>
<dbReference type="InterPro" id="IPR038801">
    <property type="entry name" value="TAF1C"/>
</dbReference>
<dbReference type="InterPro" id="IPR049087">
    <property type="entry name" value="TAF1C_beta-prop"/>
</dbReference>
<dbReference type="InterPro" id="IPR049089">
    <property type="entry name" value="TAF1C_C"/>
</dbReference>
<dbReference type="InterPro" id="IPR049090">
    <property type="entry name" value="TAF1C_HB"/>
</dbReference>
<dbReference type="InterPro" id="IPR015943">
    <property type="entry name" value="WD40/YVTN_repeat-like_dom_sf"/>
</dbReference>
<dbReference type="InterPro" id="IPR036322">
    <property type="entry name" value="WD40_repeat_dom_sf"/>
</dbReference>
<dbReference type="PANTHER" id="PTHR15319">
    <property type="entry name" value="TATA BOX-BINDING PROTEIN ASSOCIATED FACTOR RNA POLYMERASE I SUBUNIT C"/>
    <property type="match status" value="1"/>
</dbReference>
<dbReference type="PANTHER" id="PTHR15319:SF1">
    <property type="entry name" value="TATA BOX-BINDING PROTEIN-ASSOCIATED FACTOR RNA POLYMERASE I SUBUNIT C"/>
    <property type="match status" value="1"/>
</dbReference>
<dbReference type="Pfam" id="PF20641">
    <property type="entry name" value="TAF1C_beta-prop"/>
    <property type="match status" value="1"/>
</dbReference>
<dbReference type="Pfam" id="PF20643">
    <property type="entry name" value="TAF1C_C"/>
    <property type="match status" value="1"/>
</dbReference>
<dbReference type="Pfam" id="PF20642">
    <property type="entry name" value="TAF1C_HB"/>
    <property type="match status" value="1"/>
</dbReference>
<dbReference type="SUPFAM" id="SSF50978">
    <property type="entry name" value="WD40 repeat-like"/>
    <property type="match status" value="1"/>
</dbReference>
<name>TAF1C_HUMAN</name>
<accession>Q15572</accession>
<accession>B7Z5K5</accession>
<accession>B7Z5S4</accession>
<accession>B7Z908</accession>
<accession>B7Z9L7</accession>
<accession>Q59F67</accession>
<accession>Q8N6V3</accession>
<keyword id="KW-0025">Alternative splicing</keyword>
<keyword id="KW-0903">Direct protein sequencing</keyword>
<keyword id="KW-0238">DNA-binding</keyword>
<keyword id="KW-0539">Nucleus</keyword>
<keyword id="KW-0597">Phosphoprotein</keyword>
<keyword id="KW-1267">Proteomics identification</keyword>
<keyword id="KW-1185">Reference proteome</keyword>
<keyword id="KW-0804">Transcription</keyword>
<keyword id="KW-0805">Transcription regulation</keyword>
<protein>
    <recommendedName>
        <fullName>TATA box-binding protein-associated factor RNA polymerase I subunit C</fullName>
    </recommendedName>
    <alternativeName>
        <fullName>RNA polymerase I-specific TBP-associated factor 110 kDa</fullName>
        <shortName>TAFI110</shortName>
    </alternativeName>
    <alternativeName>
        <fullName>TATA box-binding protein-associated factor 1C</fullName>
        <shortName>TBP-associated factor 1C</shortName>
    </alternativeName>
    <alternativeName>
        <fullName>Transcription initiation factor SL1/TIF-IB subunit C</fullName>
    </alternativeName>
</protein>
<comment type="function">
    <text evidence="3 4 8">Component of the transcription factor SL1/TIF-IB complex, which is involved in the assembly of the PIC (pre-initiation complex) during RNA polymerase I-dependent transcription. The rate of PIC formation probably is primarily dependent on the rate of association of SL1/TIF-IB with the rDNA promoter. SL1/TIF-IB is involved in stabilization of nucleolar transcription factor 1/UBTF on rDNA. Formation of SL1/TIF-IB excludes the association of TBP with TFIID subunits. Recruits RNA polymerase I to the rRNA gene promoter via interaction with RRN3.</text>
</comment>
<comment type="subunit">
    <text evidence="2 3 4 7 9">Component of the transcription factor SL1/TIF-IB complex, composed of TBP and at least TAF1A, TAF1B, TAF1C and TAF1D. In the complex interacts directly with TBP, TAF1A and TAF1B. Interaction of the SL1/TIF-IB subunits with TBP excludes interaction of TBP with the transcription factor IID (TFIID) subunits. Interacts with MYC and RRN3. Interacts with p53/TP53; the interaction prevents the association of SL1/TIF-IB with UBTF and represses RNA polymerase I transcription. Part of Pol I pre-initiation complex (PIC), in which Pol I core assembles with RRN3 and promoter-bound UTBF and SL1/TIF-IB complex.</text>
</comment>
<comment type="interaction">
    <interactant intactId="EBI-2510659">
        <id>Q15572</id>
    </interactant>
    <interactant intactId="EBI-1053182">
        <id>Q01105</id>
        <label>SET</label>
    </interactant>
    <organismsDiffer>false</organismsDiffer>
    <experiments>4</experiments>
</comment>
<comment type="interaction">
    <interactant intactId="EBI-2510659">
        <id>Q15572</id>
    </interactant>
    <interactant intactId="EBI-1034238">
        <id>Q16514</id>
        <label>TAF12</label>
    </interactant>
    <organismsDiffer>false</organismsDiffer>
    <experiments>2</experiments>
</comment>
<comment type="interaction">
    <interactant intactId="EBI-2510659">
        <id>Q15572</id>
    </interactant>
    <interactant intactId="EBI-1560239">
        <id>Q53T94</id>
        <label>TAF1B</label>
    </interactant>
    <organismsDiffer>false</organismsDiffer>
    <experiments>4</experiments>
</comment>
<comment type="interaction">
    <interactant intactId="EBI-2510659">
        <id>Q15572</id>
    </interactant>
    <interactant intactId="EBI-355371">
        <id>P20226</id>
        <label>TBP</label>
    </interactant>
    <organismsDiffer>false</organismsDiffer>
    <experiments>3</experiments>
</comment>
<comment type="subcellular location">
    <subcellularLocation>
        <location evidence="14 15">Nucleus</location>
        <location evidence="14 15">Nucleolus</location>
    </subcellularLocation>
</comment>
<comment type="alternative products">
    <event type="alternative splicing"/>
    <isoform>
        <id>Q15572-1</id>
        <name>1</name>
        <sequence type="displayed"/>
    </isoform>
    <isoform>
        <id>Q15572-2</id>
        <name>2</name>
        <sequence type="described" ref="VSP_015153 VSP_015154 VSP_015156"/>
    </isoform>
    <isoform>
        <id>Q15572-4</id>
        <name>4</name>
        <sequence type="described" ref="VSP_038087"/>
    </isoform>
    <isoform>
        <id>Q15572-5</id>
        <name>5</name>
        <sequence type="described" ref="VSP_038086"/>
    </isoform>
    <isoform>
        <id>Q15572-6</id>
        <name>6</name>
        <sequence type="described" ref="VSP_015154"/>
    </isoform>
</comment>
<comment type="sequence caution" evidence="13">
    <conflict type="miscellaneous discrepancy">
        <sequence resource="EMBL-CDS" id="BAD92831"/>
    </conflict>
    <text>Probable cloning artifact.</text>
</comment>
<gene>
    <name type="primary">TAF1C</name>
</gene>
<sequence>MDFPSSLRPALFLTGPLGLSDVPDLSFMCSWRDALTLPEAQPQNSENGALHVTKDLLWEPATPGPLPMLPPLIDPWDPGLTARDLLFRGGCRYRKRPRVVLDVTEQISRFLLDHGDVAFAPLGKLMLENFKLEGAGSRTKKKTVVSVKKLLQDLGGHQPWGCPWAYLSNRQRRFSILGGPILGTSVASHLAELLHEELVLRWEQLLLDEACTGGALAWVPGRTPQFGQLVYPAGGAQDRLHFQEVVLTPGDNPQFLGKPGRIQLQGPVRQVVTCTVQGESKALIYTFLPHWLTCYLTPGPFHPSSALLAVRSDYHCAVWKFGKQWQPTLLQAMQVEKGATGISLSPHLPGELAICSRSGAVCLWSPEDGLRQIYRDPETLVFRDSSSWRWADFTAHPRVLTVGDRTGVKMLDTQGPPGCGLLLFRLGAEASCQKGERVLLTQYLGHSSPKCLPPTLHLVCTQFSLYLVDERLPLVPMLKWNHGLPSPLLLARLLPPPRPSCVQPLLLGGQGGQLQLLHLAGEGASVPRLAGPPQSLPSRIDSLPAFPLLEPKIQWRLQERLKAPTIGLAAVVPPLPSAPTPGLVLFQLSAAGDVFYQQLRPQVDSSLRRDAGPPGDTQPDCHAPTASWTSQDTAGCSQWLKALLKVPLAPPVWTAPTFTHRQMLGSTELRREEEEGQRLGVLRKAMARGQLLLQRDLGSLPAAEPPPAPESGLEDKLSERLGEAWAGRGAAWWERQQGRTSEPGRQTRRPKRRTQLSSSFSLSGHVDPSEDTSSPHSPEWPPADALPLPPTTPPSQELTPDACAQGVPSEQRQMLRDYMAKLPPQRDTPGCATTPPHSQASSVRATRSQQHTPVLSSSQPLRKKPRMGF</sequence>